<feature type="chain" id="PRO_0000237879" description="Shikimate kinase">
    <location>
        <begin position="1"/>
        <end position="176"/>
    </location>
</feature>
<feature type="binding site" evidence="1">
    <location>
        <begin position="14"/>
        <end position="19"/>
    </location>
    <ligand>
        <name>ATP</name>
        <dbReference type="ChEBI" id="CHEBI:30616"/>
    </ligand>
</feature>
<feature type="binding site" evidence="1">
    <location>
        <position position="18"/>
    </location>
    <ligand>
        <name>Mg(2+)</name>
        <dbReference type="ChEBI" id="CHEBI:18420"/>
    </ligand>
</feature>
<feature type="binding site" evidence="1">
    <location>
        <position position="36"/>
    </location>
    <ligand>
        <name>substrate</name>
    </ligand>
</feature>
<feature type="binding site" evidence="1">
    <location>
        <position position="60"/>
    </location>
    <ligand>
        <name>substrate</name>
    </ligand>
</feature>
<feature type="binding site" evidence="1">
    <location>
        <position position="83"/>
    </location>
    <ligand>
        <name>substrate</name>
    </ligand>
</feature>
<feature type="binding site" evidence="1">
    <location>
        <position position="121"/>
    </location>
    <ligand>
        <name>ATP</name>
        <dbReference type="ChEBI" id="CHEBI:30616"/>
    </ligand>
</feature>
<feature type="binding site" evidence="1">
    <location>
        <position position="140"/>
    </location>
    <ligand>
        <name>substrate</name>
    </ligand>
</feature>
<organism>
    <name type="scientific">Francisella tularensis subsp. tularensis (strain SCHU S4 / Schu 4)</name>
    <dbReference type="NCBI Taxonomy" id="177416"/>
    <lineage>
        <taxon>Bacteria</taxon>
        <taxon>Pseudomonadati</taxon>
        <taxon>Pseudomonadota</taxon>
        <taxon>Gammaproteobacteria</taxon>
        <taxon>Thiotrichales</taxon>
        <taxon>Francisellaceae</taxon>
        <taxon>Francisella</taxon>
    </lineage>
</organism>
<reference key="1">
    <citation type="journal article" date="2005" name="Nat. Genet.">
        <title>The complete genome sequence of Francisella tularensis, the causative agent of tularemia.</title>
        <authorList>
            <person name="Larsson P."/>
            <person name="Oyston P.C.F."/>
            <person name="Chain P."/>
            <person name="Chu M.C."/>
            <person name="Duffield M."/>
            <person name="Fuxelius H.-H."/>
            <person name="Garcia E."/>
            <person name="Haelltorp G."/>
            <person name="Johansson D."/>
            <person name="Isherwood K.E."/>
            <person name="Karp P.D."/>
            <person name="Larsson E."/>
            <person name="Liu Y."/>
            <person name="Michell S."/>
            <person name="Prior J."/>
            <person name="Prior R."/>
            <person name="Malfatti S."/>
            <person name="Sjoestedt A."/>
            <person name="Svensson K."/>
            <person name="Thompson N."/>
            <person name="Vergez L."/>
            <person name="Wagg J.K."/>
            <person name="Wren B.W."/>
            <person name="Lindler L.E."/>
            <person name="Andersson S.G.E."/>
            <person name="Forsman M."/>
            <person name="Titball R.W."/>
        </authorList>
    </citation>
    <scope>NUCLEOTIDE SEQUENCE [LARGE SCALE GENOMIC DNA]</scope>
    <source>
        <strain>SCHU S4 / Schu 4</strain>
    </source>
</reference>
<accession>Q5NFS0</accession>
<proteinExistence type="inferred from homology"/>
<comment type="function">
    <text evidence="1">Catalyzes the specific phosphorylation of the 3-hydroxyl group of shikimic acid using ATP as a cosubstrate.</text>
</comment>
<comment type="catalytic activity">
    <reaction evidence="1">
        <text>shikimate + ATP = 3-phosphoshikimate + ADP + H(+)</text>
        <dbReference type="Rhea" id="RHEA:13121"/>
        <dbReference type="ChEBI" id="CHEBI:15378"/>
        <dbReference type="ChEBI" id="CHEBI:30616"/>
        <dbReference type="ChEBI" id="CHEBI:36208"/>
        <dbReference type="ChEBI" id="CHEBI:145989"/>
        <dbReference type="ChEBI" id="CHEBI:456216"/>
        <dbReference type="EC" id="2.7.1.71"/>
    </reaction>
</comment>
<comment type="cofactor">
    <cofactor evidence="1">
        <name>Mg(2+)</name>
        <dbReference type="ChEBI" id="CHEBI:18420"/>
    </cofactor>
    <text evidence="1">Binds 1 Mg(2+) ion per subunit.</text>
</comment>
<comment type="pathway">
    <text evidence="1">Metabolic intermediate biosynthesis; chorismate biosynthesis; chorismate from D-erythrose 4-phosphate and phosphoenolpyruvate: step 5/7.</text>
</comment>
<comment type="subunit">
    <text evidence="1">Monomer.</text>
</comment>
<comment type="subcellular location">
    <subcellularLocation>
        <location evidence="1">Cytoplasm</location>
    </subcellularLocation>
</comment>
<comment type="similarity">
    <text evidence="1">Belongs to the shikimate kinase family.</text>
</comment>
<gene>
    <name evidence="1" type="primary">aroK</name>
    <name type="ordered locus">FTT_1155c</name>
</gene>
<protein>
    <recommendedName>
        <fullName evidence="1">Shikimate kinase</fullName>
        <shortName evidence="1">SK</shortName>
        <ecNumber evidence="1">2.7.1.71</ecNumber>
    </recommendedName>
</protein>
<name>AROK_FRATT</name>
<sequence>MIRTKNIFLIGPVGAGKSTIGKQLAKQLKLEFIDSDDVIEKKCGVDINWIFDLEGEEGFRKREREVIAEILAEKQNIVLATGGGAILDPETRSLLSSRGKVVYLEATIEQQLERTSKDTKRPLLRVDDKRPVLEQLMAEREPLYRSIADVVVETNGATVKNIVNKISTFLVEETIL</sequence>
<keyword id="KW-0028">Amino-acid biosynthesis</keyword>
<keyword id="KW-0057">Aromatic amino acid biosynthesis</keyword>
<keyword id="KW-0067">ATP-binding</keyword>
<keyword id="KW-0963">Cytoplasm</keyword>
<keyword id="KW-0418">Kinase</keyword>
<keyword id="KW-0460">Magnesium</keyword>
<keyword id="KW-0479">Metal-binding</keyword>
<keyword id="KW-0547">Nucleotide-binding</keyword>
<keyword id="KW-1185">Reference proteome</keyword>
<keyword id="KW-0808">Transferase</keyword>
<dbReference type="EC" id="2.7.1.71" evidence="1"/>
<dbReference type="EMBL" id="AJ749949">
    <property type="protein sequence ID" value="CAG45788.1"/>
    <property type="molecule type" value="Genomic_DNA"/>
</dbReference>
<dbReference type="RefSeq" id="WP_003018629.1">
    <property type="nucleotide sequence ID" value="NZ_CP010290.1"/>
</dbReference>
<dbReference type="RefSeq" id="YP_170122.1">
    <property type="nucleotide sequence ID" value="NC_006570.2"/>
</dbReference>
<dbReference type="SMR" id="Q5NFS0"/>
<dbReference type="STRING" id="177416.FTT_1155c"/>
<dbReference type="DNASU" id="3192541"/>
<dbReference type="EnsemblBacteria" id="CAG45788">
    <property type="protein sequence ID" value="CAG45788"/>
    <property type="gene ID" value="FTT_1155c"/>
</dbReference>
<dbReference type="GeneID" id="75265130"/>
<dbReference type="KEGG" id="ftu:FTT_1155c"/>
<dbReference type="eggNOG" id="COG0703">
    <property type="taxonomic scope" value="Bacteria"/>
</dbReference>
<dbReference type="OrthoDB" id="9800332at2"/>
<dbReference type="UniPathway" id="UPA00053">
    <property type="reaction ID" value="UER00088"/>
</dbReference>
<dbReference type="Proteomes" id="UP000001174">
    <property type="component" value="Chromosome"/>
</dbReference>
<dbReference type="GO" id="GO:0005829">
    <property type="term" value="C:cytosol"/>
    <property type="evidence" value="ECO:0007669"/>
    <property type="project" value="TreeGrafter"/>
</dbReference>
<dbReference type="GO" id="GO:0005524">
    <property type="term" value="F:ATP binding"/>
    <property type="evidence" value="ECO:0007669"/>
    <property type="project" value="UniProtKB-UniRule"/>
</dbReference>
<dbReference type="GO" id="GO:0016887">
    <property type="term" value="F:ATP hydrolysis activity"/>
    <property type="evidence" value="ECO:0007669"/>
    <property type="project" value="InterPro"/>
</dbReference>
<dbReference type="GO" id="GO:0000287">
    <property type="term" value="F:magnesium ion binding"/>
    <property type="evidence" value="ECO:0007669"/>
    <property type="project" value="UniProtKB-UniRule"/>
</dbReference>
<dbReference type="GO" id="GO:0004765">
    <property type="term" value="F:shikimate kinase activity"/>
    <property type="evidence" value="ECO:0007669"/>
    <property type="project" value="UniProtKB-UniRule"/>
</dbReference>
<dbReference type="GO" id="GO:0008652">
    <property type="term" value="P:amino acid biosynthetic process"/>
    <property type="evidence" value="ECO:0007669"/>
    <property type="project" value="UniProtKB-KW"/>
</dbReference>
<dbReference type="GO" id="GO:0009073">
    <property type="term" value="P:aromatic amino acid family biosynthetic process"/>
    <property type="evidence" value="ECO:0007669"/>
    <property type="project" value="UniProtKB-KW"/>
</dbReference>
<dbReference type="GO" id="GO:0009423">
    <property type="term" value="P:chorismate biosynthetic process"/>
    <property type="evidence" value="ECO:0007669"/>
    <property type="project" value="UniProtKB-UniRule"/>
</dbReference>
<dbReference type="CDD" id="cd00464">
    <property type="entry name" value="SK"/>
    <property type="match status" value="1"/>
</dbReference>
<dbReference type="Gene3D" id="3.40.50.300">
    <property type="entry name" value="P-loop containing nucleotide triphosphate hydrolases"/>
    <property type="match status" value="1"/>
</dbReference>
<dbReference type="HAMAP" id="MF_00109">
    <property type="entry name" value="Shikimate_kinase"/>
    <property type="match status" value="1"/>
</dbReference>
<dbReference type="InterPro" id="IPR003593">
    <property type="entry name" value="AAA+_ATPase"/>
</dbReference>
<dbReference type="InterPro" id="IPR027417">
    <property type="entry name" value="P-loop_NTPase"/>
</dbReference>
<dbReference type="InterPro" id="IPR031322">
    <property type="entry name" value="Shikimate/glucono_kinase"/>
</dbReference>
<dbReference type="InterPro" id="IPR000623">
    <property type="entry name" value="Shikimate_kinase/TSH1"/>
</dbReference>
<dbReference type="InterPro" id="IPR023000">
    <property type="entry name" value="Shikimate_kinase_CS"/>
</dbReference>
<dbReference type="NCBIfam" id="NF003456">
    <property type="entry name" value="PRK05057.1"/>
    <property type="match status" value="1"/>
</dbReference>
<dbReference type="PANTHER" id="PTHR21087">
    <property type="entry name" value="SHIKIMATE KINASE"/>
    <property type="match status" value="1"/>
</dbReference>
<dbReference type="PANTHER" id="PTHR21087:SF16">
    <property type="entry name" value="SHIKIMATE KINASE 1, CHLOROPLASTIC"/>
    <property type="match status" value="1"/>
</dbReference>
<dbReference type="Pfam" id="PF01202">
    <property type="entry name" value="SKI"/>
    <property type="match status" value="1"/>
</dbReference>
<dbReference type="PRINTS" id="PR01100">
    <property type="entry name" value="SHIKIMTKNASE"/>
</dbReference>
<dbReference type="SMART" id="SM00382">
    <property type="entry name" value="AAA"/>
    <property type="match status" value="1"/>
</dbReference>
<dbReference type="SUPFAM" id="SSF52540">
    <property type="entry name" value="P-loop containing nucleoside triphosphate hydrolases"/>
    <property type="match status" value="1"/>
</dbReference>
<dbReference type="PROSITE" id="PS01128">
    <property type="entry name" value="SHIKIMATE_KINASE"/>
    <property type="match status" value="1"/>
</dbReference>
<evidence type="ECO:0000255" key="1">
    <source>
        <dbReference type="HAMAP-Rule" id="MF_00109"/>
    </source>
</evidence>